<comment type="function">
    <text evidence="5 8">Catalyzes NAD(+)-dependent oxidation of vanillin to vanillate. Also oxidizes other aromatic aldehydes including benzaldehyde, coniferyl aldehyde and cinnamaldehyde, but has a preference for vanillin. Not active with NADP(+) (PubMed:23064333). Involved in the degradation pathway of lignin-derived aromatic compounds of plant cell walls. Catalyzes the conversion of vanillin to vanillate due to toxicity of vanillin to the cells (Probable).</text>
</comment>
<comment type="catalytic activity">
    <reaction evidence="5">
        <text>vanillin + NAD(+) + H2O = vanillate + NADH + 2 H(+)</text>
        <dbReference type="Rhea" id="RHEA:13309"/>
        <dbReference type="ChEBI" id="CHEBI:15377"/>
        <dbReference type="ChEBI" id="CHEBI:15378"/>
        <dbReference type="ChEBI" id="CHEBI:16632"/>
        <dbReference type="ChEBI" id="CHEBI:18346"/>
        <dbReference type="ChEBI" id="CHEBI:57540"/>
        <dbReference type="ChEBI" id="CHEBI:57945"/>
        <dbReference type="EC" id="1.2.1.67"/>
    </reaction>
    <physiologicalReaction direction="left-to-right" evidence="5">
        <dbReference type="Rhea" id="RHEA:13310"/>
    </physiologicalReaction>
</comment>
<comment type="biophysicochemical properties">
    <phDependence>
        <text evidence="5">Optimum pH is 8.0 for the NAD(+)-dependent oxidation of vanillin. Active between pH 5.0-9.0.</text>
    </phDependence>
    <temperatureDependence>
        <text evidence="5">Optimum temperature is 44 degrees Celsius for the NAD(+)-dependent oxidation of vanillin. Active between 15-65 degrees Celsius. Retains 86% of the activity after storage at 4 degrees Celsius for 24 hours.</text>
    </temperatureDependence>
</comment>
<comment type="induction">
    <text evidence="5">By vanillin and ferulic acid.</text>
</comment>
<comment type="disruption phenotype">
    <text evidence="5 6">No growth on vanillin and no vanillin dehydrogenase activity. Degrades ferulic acid in a similar way to wild-type. The deletion mutant produces higher vanillin concentration being provided ferulic acid for the synthesis of vanillin as the mutant is only very slowly oxidized to vanillate.</text>
</comment>
<comment type="biotechnology">
    <text evidence="5 6">Vanillin is toxic to the cells and hence it is subject to catabolism caused by the oxidative activity of this protein. This is undesired from the production point of view of this important compound. The deletion mutant of this protein can be used in production of natural vanillin by microbial fermentation from ferulic acid at final concentrations and molar yields on an industrial scale (PubMed:23064333, PubMed:27037121). Further improvement of vanillin synthesis by the deletion mutant can be achieved with simultaneous constitutive overexpression of the vanillin anabolism enzymes feruloyl-coenzyme A (CoA) synthetase (Fcs) and enoyl-CoA hydratase/aldolase (Ech) (PubMed:27037121).</text>
</comment>
<comment type="similarity">
    <text evidence="4">Belongs to the aldehyde dehydrogenase family.</text>
</comment>
<sequence>MSFLDDEKWTGRVFTGSWERAAGGDAAVIEPATGDELGRVGIASPQDLAASAAKAAEAQRAWAATSFQERAAVLRRAGDLWQQHAAELKDWLIRESGSIPGKADFELHVAAQECYEAAALPSHPTGEVLPSEAPRLSMARRVPAGVVGVIAPFNAPLILSIRSVAPALALGNSVVLKPDPRTAVCGGVALARVFEEAGLPAGVLHVLPGGPDVGAALVEDKHVRVISFTGSTAAGRAVGESAGRHLKRAHLELGGNSALIVLDDADLEQAMSAAAWGSFFHQGQICMTTGRHLVHASLYDEYVDRLADKASHLPVGNPFTEQVALGPIIDAKQRDKIHGLVTSSVDAGAKVAAGGTYEDLFYRATVLAGAGPSVPAYDQEVFGPVAPVAKFTSLDEAAKLASESEYGLSLGIITADVAKGLALADRIPTGIAHINDQTVNDEALAPFGGVFDSGTGSRFGGPAANIEAFTETRWVTMRGDVAGYPF</sequence>
<dbReference type="EC" id="1.2.1.67" evidence="5"/>
<dbReference type="EMBL" id="JX292129">
    <property type="protein sequence ID" value="AFY98904.1"/>
    <property type="molecule type" value="Genomic_DNA"/>
</dbReference>
<dbReference type="RefSeq" id="WP_020422127.1">
    <property type="nucleotide sequence ID" value="NZ_AFWY03000053.1"/>
</dbReference>
<dbReference type="SMR" id="K9UV87"/>
<dbReference type="BRENDA" id="1.2.1.67">
    <property type="organism ID" value="316"/>
</dbReference>
<dbReference type="GO" id="GO:0016620">
    <property type="term" value="F:oxidoreductase activity, acting on the aldehyde or oxo group of donors, NAD or NADP as acceptor"/>
    <property type="evidence" value="ECO:0007669"/>
    <property type="project" value="InterPro"/>
</dbReference>
<dbReference type="CDD" id="cd07152">
    <property type="entry name" value="ALDH_BenzADH"/>
    <property type="match status" value="1"/>
</dbReference>
<dbReference type="Gene3D" id="3.40.605.10">
    <property type="entry name" value="Aldehyde Dehydrogenase, Chain A, domain 1"/>
    <property type="match status" value="1"/>
</dbReference>
<dbReference type="Gene3D" id="3.40.309.10">
    <property type="entry name" value="Aldehyde Dehydrogenase, Chain A, domain 2"/>
    <property type="match status" value="1"/>
</dbReference>
<dbReference type="InterPro" id="IPR016161">
    <property type="entry name" value="Ald_DH/histidinol_DH"/>
</dbReference>
<dbReference type="InterPro" id="IPR016163">
    <property type="entry name" value="Ald_DH_C"/>
</dbReference>
<dbReference type="InterPro" id="IPR029510">
    <property type="entry name" value="Ald_DH_CS_GLU"/>
</dbReference>
<dbReference type="InterPro" id="IPR016162">
    <property type="entry name" value="Ald_DH_N"/>
</dbReference>
<dbReference type="InterPro" id="IPR015590">
    <property type="entry name" value="Aldehyde_DH_dom"/>
</dbReference>
<dbReference type="PANTHER" id="PTHR42986">
    <property type="entry name" value="BENZALDEHYDE DEHYDROGENASE YFMT"/>
    <property type="match status" value="1"/>
</dbReference>
<dbReference type="PANTHER" id="PTHR42986:SF1">
    <property type="entry name" value="BENZALDEHYDE DEHYDROGENASE YFMT"/>
    <property type="match status" value="1"/>
</dbReference>
<dbReference type="Pfam" id="PF00171">
    <property type="entry name" value="Aldedh"/>
    <property type="match status" value="1"/>
</dbReference>
<dbReference type="SUPFAM" id="SSF53720">
    <property type="entry name" value="ALDH-like"/>
    <property type="match status" value="1"/>
</dbReference>
<dbReference type="PROSITE" id="PS00687">
    <property type="entry name" value="ALDEHYDE_DEHYDR_GLU"/>
    <property type="match status" value="1"/>
</dbReference>
<reference evidence="9" key="1">
    <citation type="journal article" date="2013" name="Appl. Environ. Microbiol.">
        <title>Investigation of the Amycolatopsis sp. Strain ATCC 39116 Vanillin Dehydrogenase and Its Impact on the Biotechnical Production of Vanillin.</title>
        <authorList>
            <person name="Fleige C."/>
            <person name="Hansen G."/>
            <person name="Kroll J."/>
            <person name="Steinbuchel A."/>
        </authorList>
    </citation>
    <scope>NUCLEOTIDE SEQUENCE [GENOMIC DNA]</scope>
    <scope>FUNCTION</scope>
    <scope>CATALYTIC ACTIVITY</scope>
    <scope>SUBSTRATE SPECIFICITY</scope>
    <scope>BIOPHYSICOCHEMICAL PROPERTIES</scope>
    <scope>INDUCTION</scope>
    <scope>DISRUPTION PHENOTYPE</scope>
    <scope>BIOTECHNOLOGY</scope>
    <source>
        <strain evidence="7 9">ATCC 39116 / 75iv2</strain>
    </source>
</reference>
<reference key="2">
    <citation type="journal article" date="2016" name="Appl. Environ. Microbiol.">
        <title>Metabolic Engineering of the Actinomycete Amycolatopsis sp. Strain ATCC 39116 towards Enhanced Production of Natural Vanillin.</title>
        <authorList>
            <person name="Fleige C."/>
            <person name="Meyer F."/>
            <person name="Steinbuechel A."/>
        </authorList>
    </citation>
    <scope>DISRUPTION PHENOTYPE</scope>
    <scope>BIOTECHNOLOGY</scope>
</reference>
<gene>
    <name evidence="7 9" type="primary">vdh</name>
    <name evidence="9" type="ORF">RAMY07374</name>
</gene>
<proteinExistence type="evidence at protein level"/>
<keyword id="KW-0520">NAD</keyword>
<keyword id="KW-0560">Oxidoreductase</keyword>
<protein>
    <recommendedName>
        <fullName evidence="7">Vanillin dehydrogenase</fullName>
        <ecNumber evidence="5">1.2.1.67</ecNumber>
    </recommendedName>
    <alternativeName>
        <fullName evidence="9">Benzaldehyde dehydrogenase [NAD(+)]</fullName>
    </alternativeName>
</protein>
<evidence type="ECO:0000250" key="1">
    <source>
        <dbReference type="UniProtKB" id="P00352"/>
    </source>
</evidence>
<evidence type="ECO:0000250" key="2">
    <source>
        <dbReference type="UniProtKB" id="P25526"/>
    </source>
</evidence>
<evidence type="ECO:0000255" key="3">
    <source>
        <dbReference type="PROSITE-ProRule" id="PRU10007"/>
    </source>
</evidence>
<evidence type="ECO:0000255" key="4">
    <source>
        <dbReference type="RuleBase" id="RU003345"/>
    </source>
</evidence>
<evidence type="ECO:0000269" key="5">
    <source>
    </source>
</evidence>
<evidence type="ECO:0000269" key="6">
    <source>
    </source>
</evidence>
<evidence type="ECO:0000303" key="7">
    <source>
    </source>
</evidence>
<evidence type="ECO:0000305" key="8"/>
<evidence type="ECO:0000312" key="9">
    <source>
        <dbReference type="EMBL" id="AFY98904.1"/>
    </source>
</evidence>
<name>VDH_AMYS7</name>
<feature type="chain" id="PRO_0000456537" description="Vanillin dehydrogenase">
    <location>
        <begin position="1"/>
        <end position="486"/>
    </location>
</feature>
<feature type="active site" description="Proton acceptor" evidence="2 3">
    <location>
        <position position="252"/>
    </location>
</feature>
<feature type="active site" description="Nucleophile" evidence="2">
    <location>
        <position position="286"/>
    </location>
</feature>
<feature type="binding site" evidence="1">
    <location>
        <begin position="210"/>
        <end position="211"/>
    </location>
    <ligand>
        <name>NAD(+)</name>
        <dbReference type="ChEBI" id="CHEBI:57540"/>
    </ligand>
</feature>
<feature type="binding site" evidence="1">
    <location>
        <begin position="230"/>
        <end position="231"/>
    </location>
    <ligand>
        <name>NAD(+)</name>
        <dbReference type="ChEBI" id="CHEBI:57540"/>
    </ligand>
</feature>
<feature type="binding site" evidence="1">
    <location>
        <begin position="252"/>
        <end position="254"/>
    </location>
    <ligand>
        <name>NAD(+)</name>
        <dbReference type="ChEBI" id="CHEBI:57540"/>
    </ligand>
</feature>
<feature type="binding site" evidence="1">
    <location>
        <begin position="380"/>
        <end position="382"/>
    </location>
    <ligand>
        <name>NAD(+)</name>
        <dbReference type="ChEBI" id="CHEBI:57540"/>
    </ligand>
</feature>
<feature type="site" description="Transition state stabilizer" evidence="1">
    <location>
        <position position="154"/>
    </location>
</feature>
<accession>K9UV87</accession>
<organism evidence="9">
    <name type="scientific">Amycolatopsis sp. (strain ATCC 39116 / 75iv2)</name>
    <dbReference type="NCBI Taxonomy" id="385957"/>
    <lineage>
        <taxon>Bacteria</taxon>
        <taxon>Bacillati</taxon>
        <taxon>Actinomycetota</taxon>
        <taxon>Actinomycetes</taxon>
        <taxon>Pseudonocardiales</taxon>
        <taxon>Pseudonocardiaceae</taxon>
        <taxon>Amycolatopsis</taxon>
    </lineage>
</organism>